<gene>
    <name type="ORF">PMAA_051990</name>
</gene>
<feature type="chain" id="PRO_0000406161" description="Putative glutathione-dependent formaldehyde-activating enzyme">
    <location>
        <begin position="1"/>
        <end position="187"/>
    </location>
</feature>
<feature type="domain" description="CENP-V/GFA" evidence="2">
    <location>
        <begin position="20"/>
        <end position="166"/>
    </location>
</feature>
<feature type="binding site" evidence="1 2">
    <location>
        <position position="27"/>
    </location>
    <ligand>
        <name>Zn(2+)</name>
        <dbReference type="ChEBI" id="CHEBI:29105"/>
        <label>1</label>
        <note>structural</note>
    </ligand>
</feature>
<feature type="binding site" evidence="1 2">
    <location>
        <position position="29"/>
    </location>
    <ligand>
        <name>Zn(2+)</name>
        <dbReference type="ChEBI" id="CHEBI:29105"/>
        <label>1</label>
        <note>structural</note>
    </ligand>
</feature>
<feature type="binding site" evidence="1 2">
    <location>
        <position position="48"/>
    </location>
    <ligand>
        <name>Zn(2+)</name>
        <dbReference type="ChEBI" id="CHEBI:29105"/>
        <label>2</label>
        <note>catalytic</note>
    </ligand>
</feature>
<feature type="binding site" evidence="1 2">
    <location>
        <position position="50"/>
    </location>
    <ligand>
        <name>Zn(2+)</name>
        <dbReference type="ChEBI" id="CHEBI:29105"/>
        <label>2</label>
        <note>catalytic</note>
    </ligand>
</feature>
<feature type="binding site" evidence="1 2">
    <location>
        <position position="53"/>
    </location>
    <ligand>
        <name>Zn(2+)</name>
        <dbReference type="ChEBI" id="CHEBI:29105"/>
        <label>2</label>
        <note>catalytic</note>
    </ligand>
</feature>
<feature type="binding site" evidence="1 2">
    <location>
        <position position="95"/>
    </location>
    <ligand>
        <name>Zn(2+)</name>
        <dbReference type="ChEBI" id="CHEBI:29105"/>
        <label>1</label>
        <note>structural</note>
    </ligand>
</feature>
<feature type="binding site" evidence="1 2">
    <location>
        <position position="98"/>
    </location>
    <ligand>
        <name>Zn(2+)</name>
        <dbReference type="ChEBI" id="CHEBI:29105"/>
        <label>1</label>
        <note>structural</note>
    </ligand>
</feature>
<reference key="1">
    <citation type="journal article" date="2015" name="Genome Announc.">
        <title>Genome sequence of the AIDS-associated pathogen Penicillium marneffei (ATCC18224) and its near taxonomic relative Talaromyces stipitatus (ATCC10500).</title>
        <authorList>
            <person name="Nierman W.C."/>
            <person name="Fedorova-Abrams N.D."/>
            <person name="Andrianopoulos A."/>
        </authorList>
    </citation>
    <scope>NUCLEOTIDE SEQUENCE [LARGE SCALE GENOMIC DNA]</scope>
    <source>
        <strain>ATCC 18224 / CBS 334.59 / QM 7333</strain>
    </source>
</reference>
<proteinExistence type="inferred from homology"/>
<accession>B6QNA1</accession>
<protein>
    <recommendedName>
        <fullName evidence="1">Putative glutathione-dependent formaldehyde-activating enzyme</fullName>
        <ecNumber evidence="1">4.4.1.22</ecNumber>
    </recommendedName>
    <alternativeName>
        <fullName evidence="1">S-(hydroxymethyl)glutathione synthase</fullName>
    </alternativeName>
</protein>
<organism>
    <name type="scientific">Talaromyces marneffei (strain ATCC 18224 / CBS 334.59 / QM 7333)</name>
    <name type="common">Penicillium marneffei</name>
    <dbReference type="NCBI Taxonomy" id="441960"/>
    <lineage>
        <taxon>Eukaryota</taxon>
        <taxon>Fungi</taxon>
        <taxon>Dikarya</taxon>
        <taxon>Ascomycota</taxon>
        <taxon>Pezizomycotina</taxon>
        <taxon>Eurotiomycetes</taxon>
        <taxon>Eurotiomycetidae</taxon>
        <taxon>Eurotiales</taxon>
        <taxon>Trichocomaceae</taxon>
        <taxon>Talaromyces</taxon>
        <taxon>Talaromyces sect. Talaromyces</taxon>
    </lineage>
</organism>
<keyword id="KW-0456">Lyase</keyword>
<keyword id="KW-0479">Metal-binding</keyword>
<keyword id="KW-1185">Reference proteome</keyword>
<keyword id="KW-0862">Zinc</keyword>
<evidence type="ECO:0000255" key="1">
    <source>
        <dbReference type="HAMAP-Rule" id="MF_03142"/>
    </source>
</evidence>
<evidence type="ECO:0000255" key="2">
    <source>
        <dbReference type="PROSITE-ProRule" id="PRU01239"/>
    </source>
</evidence>
<evidence type="ECO:0000305" key="3"/>
<comment type="function">
    <text evidence="1">Catalyzes the condensation of formaldehyde and glutathione to S-hydroxymethylglutathione.</text>
</comment>
<comment type="catalytic activity">
    <reaction evidence="1">
        <text>S-(hydroxymethyl)glutathione = glutathione + formaldehyde</text>
        <dbReference type="Rhea" id="RHEA:22488"/>
        <dbReference type="ChEBI" id="CHEBI:16842"/>
        <dbReference type="ChEBI" id="CHEBI:57925"/>
        <dbReference type="ChEBI" id="CHEBI:58758"/>
        <dbReference type="EC" id="4.4.1.22"/>
    </reaction>
</comment>
<comment type="cofactor">
    <cofactor evidence="1 2">
        <name>Zn(2+)</name>
        <dbReference type="ChEBI" id="CHEBI:29105"/>
    </cofactor>
    <text evidence="1 2">Binds 2 Zn(2+) ions per subunit.</text>
</comment>
<comment type="pathway">
    <text evidence="1">One-carbon metabolism; formaldehyde degradation; formate from formaldehyde (glutathione route): step 1/3.</text>
</comment>
<comment type="similarity">
    <text evidence="3">Belongs to the Gfa family.</text>
</comment>
<name>GFA_TALMQ</name>
<sequence>MGLSLHPQIDNGLTKGQPGFPGGKLYCHCPSNKIEVTLGSDVLHNHACGCSKCWKPAGSLFSVVGVIPTDKVSVTANSDKLTIVDSEAVIQRNACSQCGVHMFGRIHKEHPFKGLDFVHAELSDTKGWQEPQFAAFVSSIIEQGFKPEGMDEVRAKFESVGLKTYDALSPALMDAIATWTAKRAGKL</sequence>
<dbReference type="EC" id="4.4.1.22" evidence="1"/>
<dbReference type="EMBL" id="DS995903">
    <property type="protein sequence ID" value="EEA21389.1"/>
    <property type="molecule type" value="Genomic_DNA"/>
</dbReference>
<dbReference type="RefSeq" id="XP_002149998.1">
    <property type="nucleotide sequence ID" value="XM_002149962.1"/>
</dbReference>
<dbReference type="SMR" id="B6QNA1"/>
<dbReference type="STRING" id="441960.B6QNA1"/>
<dbReference type="VEuPathDB" id="FungiDB:PMAA_051990"/>
<dbReference type="HOGENOM" id="CLU_090716_0_0_1"/>
<dbReference type="OrthoDB" id="140at28568"/>
<dbReference type="PhylomeDB" id="B6QNA1"/>
<dbReference type="UniPathway" id="UPA00562">
    <property type="reaction ID" value="UER00621"/>
</dbReference>
<dbReference type="Proteomes" id="UP000001294">
    <property type="component" value="Unassembled WGS sequence"/>
</dbReference>
<dbReference type="GO" id="GO:0051907">
    <property type="term" value="F:S-(hydroxymethyl)glutathione synthase activity"/>
    <property type="evidence" value="ECO:0007669"/>
    <property type="project" value="UniProtKB-UniRule"/>
</dbReference>
<dbReference type="GO" id="GO:0008270">
    <property type="term" value="F:zinc ion binding"/>
    <property type="evidence" value="ECO:0007669"/>
    <property type="project" value="UniProtKB-UniRule"/>
</dbReference>
<dbReference type="GO" id="GO:0046294">
    <property type="term" value="P:formaldehyde catabolic process"/>
    <property type="evidence" value="ECO:0007669"/>
    <property type="project" value="UniProtKB-UniRule"/>
</dbReference>
<dbReference type="Gene3D" id="3.90.1590.10">
    <property type="entry name" value="glutathione-dependent formaldehyde- activating enzyme (gfa)"/>
    <property type="match status" value="1"/>
</dbReference>
<dbReference type="HAMAP" id="MF_00723">
    <property type="entry name" value="Formald_GSH"/>
    <property type="match status" value="1"/>
</dbReference>
<dbReference type="InterPro" id="IPR006913">
    <property type="entry name" value="CENP-V/GFA"/>
</dbReference>
<dbReference type="InterPro" id="IPR014185">
    <property type="entry name" value="Formald_GSH"/>
</dbReference>
<dbReference type="InterPro" id="IPR011057">
    <property type="entry name" value="Mss4-like_sf"/>
</dbReference>
<dbReference type="NCBIfam" id="TIGR02820">
    <property type="entry name" value="formald_GSH"/>
    <property type="match status" value="1"/>
</dbReference>
<dbReference type="NCBIfam" id="NF003829">
    <property type="entry name" value="PRK05417.1"/>
    <property type="match status" value="1"/>
</dbReference>
<dbReference type="PANTHER" id="PTHR33337:SF40">
    <property type="entry name" value="CENP-V_GFA DOMAIN-CONTAINING PROTEIN-RELATED"/>
    <property type="match status" value="1"/>
</dbReference>
<dbReference type="PANTHER" id="PTHR33337">
    <property type="entry name" value="GFA DOMAIN-CONTAINING PROTEIN"/>
    <property type="match status" value="1"/>
</dbReference>
<dbReference type="Pfam" id="PF04828">
    <property type="entry name" value="GFA"/>
    <property type="match status" value="1"/>
</dbReference>
<dbReference type="PIRSF" id="PIRSF033318">
    <property type="entry name" value="Formald_GSH"/>
    <property type="match status" value="1"/>
</dbReference>
<dbReference type="SUPFAM" id="SSF51316">
    <property type="entry name" value="Mss4-like"/>
    <property type="match status" value="1"/>
</dbReference>
<dbReference type="PROSITE" id="PS51891">
    <property type="entry name" value="CENP_V_GFA"/>
    <property type="match status" value="1"/>
</dbReference>